<organism>
    <name type="scientific">Arabidopsis thaliana</name>
    <name type="common">Mouse-ear cress</name>
    <dbReference type="NCBI Taxonomy" id="3702"/>
    <lineage>
        <taxon>Eukaryota</taxon>
        <taxon>Viridiplantae</taxon>
        <taxon>Streptophyta</taxon>
        <taxon>Embryophyta</taxon>
        <taxon>Tracheophyta</taxon>
        <taxon>Spermatophyta</taxon>
        <taxon>Magnoliopsida</taxon>
        <taxon>eudicotyledons</taxon>
        <taxon>Gunneridae</taxon>
        <taxon>Pentapetalae</taxon>
        <taxon>rosids</taxon>
        <taxon>malvids</taxon>
        <taxon>Brassicales</taxon>
        <taxon>Brassicaceae</taxon>
        <taxon>Camelineae</taxon>
        <taxon>Arabidopsis</taxon>
    </lineage>
</organism>
<dbReference type="EMBL" id="AL035394">
    <property type="protein sequence ID" value="CAA23045.1"/>
    <property type="status" value="ALT_INIT"/>
    <property type="molecule type" value="Genomic_DNA"/>
</dbReference>
<dbReference type="EMBL" id="AL161560">
    <property type="protein sequence ID" value="CAB81297.1"/>
    <property type="status" value="ALT_INIT"/>
    <property type="molecule type" value="Genomic_DNA"/>
</dbReference>
<dbReference type="EMBL" id="CP002687">
    <property type="protein sequence ID" value="AEE84806.1"/>
    <property type="molecule type" value="Genomic_DNA"/>
</dbReference>
<dbReference type="EMBL" id="AY142519">
    <property type="protein sequence ID" value="AAN13062.1"/>
    <property type="molecule type" value="mRNA"/>
</dbReference>
<dbReference type="PIR" id="T05611">
    <property type="entry name" value="T05611"/>
</dbReference>
<dbReference type="RefSeq" id="NP_194110.2">
    <property type="nucleotide sequence ID" value="NM_118510.4"/>
</dbReference>
<dbReference type="SMR" id="Q8H1R3"/>
<dbReference type="FunCoup" id="Q8H1R3">
    <property type="interactions" value="43"/>
</dbReference>
<dbReference type="STRING" id="3702.Q8H1R3"/>
<dbReference type="PaxDb" id="3702-AT4G23790.1"/>
<dbReference type="ProteomicsDB" id="234186"/>
<dbReference type="EnsemblPlants" id="AT4G23790.1">
    <property type="protein sequence ID" value="AT4G23790.1"/>
    <property type="gene ID" value="AT4G23790"/>
</dbReference>
<dbReference type="GeneID" id="828479"/>
<dbReference type="Gramene" id="AT4G23790.1">
    <property type="protein sequence ID" value="AT4G23790.1"/>
    <property type="gene ID" value="AT4G23790"/>
</dbReference>
<dbReference type="KEGG" id="ath:AT4G23790"/>
<dbReference type="Araport" id="AT4G23790"/>
<dbReference type="TAIR" id="AT4G23790">
    <property type="gene designation" value="TBL24"/>
</dbReference>
<dbReference type="eggNOG" id="ENOG502QSJI">
    <property type="taxonomic scope" value="Eukaryota"/>
</dbReference>
<dbReference type="HOGENOM" id="CLU_020953_6_4_1"/>
<dbReference type="InParanoid" id="Q8H1R3"/>
<dbReference type="OMA" id="QNGEWHS"/>
<dbReference type="OrthoDB" id="630188at2759"/>
<dbReference type="PhylomeDB" id="Q8H1R3"/>
<dbReference type="PRO" id="PR:Q8H1R3"/>
<dbReference type="Proteomes" id="UP000006548">
    <property type="component" value="Chromosome 4"/>
</dbReference>
<dbReference type="ExpressionAtlas" id="Q8H1R3">
    <property type="expression patterns" value="baseline and differential"/>
</dbReference>
<dbReference type="GO" id="GO:0016020">
    <property type="term" value="C:membrane"/>
    <property type="evidence" value="ECO:0007669"/>
    <property type="project" value="UniProtKB-SubCell"/>
</dbReference>
<dbReference type="GO" id="GO:0016413">
    <property type="term" value="F:O-acetyltransferase activity"/>
    <property type="evidence" value="ECO:0000314"/>
    <property type="project" value="TAIR"/>
</dbReference>
<dbReference type="InterPro" id="IPR029962">
    <property type="entry name" value="TBL"/>
</dbReference>
<dbReference type="InterPro" id="IPR026057">
    <property type="entry name" value="TBL_C"/>
</dbReference>
<dbReference type="InterPro" id="IPR025846">
    <property type="entry name" value="TBL_N"/>
</dbReference>
<dbReference type="PANTHER" id="PTHR32285:SF219">
    <property type="entry name" value="PROTEIN TRICHOME BIREFRINGENCE-LIKE 24"/>
    <property type="match status" value="1"/>
</dbReference>
<dbReference type="PANTHER" id="PTHR32285">
    <property type="entry name" value="PROTEIN TRICHOME BIREFRINGENCE-LIKE 9-RELATED"/>
    <property type="match status" value="1"/>
</dbReference>
<dbReference type="Pfam" id="PF13839">
    <property type="entry name" value="PC-Esterase"/>
    <property type="match status" value="1"/>
</dbReference>
<dbReference type="Pfam" id="PF14416">
    <property type="entry name" value="PMR5N"/>
    <property type="match status" value="1"/>
</dbReference>
<keyword id="KW-0472">Membrane</keyword>
<keyword id="KW-1185">Reference proteome</keyword>
<keyword id="KW-0735">Signal-anchor</keyword>
<keyword id="KW-0812">Transmembrane</keyword>
<keyword id="KW-1133">Transmembrane helix</keyword>
<sequence>MKLKLSSISMNHKNVLLIKLISAILISFFAFRLFILHSSEFSPIFASVTGKFEARFLPPEIIVPENEDLIPQDIEVEKCDLFAGKWIPDSVGPIYTNKSCGSLIDGHQNCITNGRPDLDFLYWKWKPHDCLLPRFDPRRFLQLMRHKSWAFIGDSISRNHVESLLCMLSTIEEPVEVYHDMEYKSKRWHFPLHNLTVSNIWSPFLVQAAIFEDSNGVSTASVQLHLDRLDETWTSLMPSFDYAIISTGKWFLKSAIYHENAKLVGCHNCQEKPHIEELGFDYAYNASLHNVMDFLAAEDNSKGTVFFRTSTPDHFQNGEWHSGGTCKQTEPVSDEEIEIKDVHKILKDIEIDQFKRAVREKTNQDGGNLKLLDFTRMLLTRPDGHPGEYRQFRPFDKDKNAKVQNDCLHWCLPGPFDYLNDVILETIVNG</sequence>
<protein>
    <recommendedName>
        <fullName>Protein trichome birefringence-like 24</fullName>
    </recommendedName>
</protein>
<name>TBL24_ARATH</name>
<gene>
    <name type="primary">TBL24</name>
    <name type="ordered locus">At4g23790</name>
    <name type="ORF">F9D16.260</name>
</gene>
<proteinExistence type="evidence at transcript level"/>
<feature type="chain" id="PRO_0000425389" description="Protein trichome birefringence-like 24">
    <location>
        <begin position="1"/>
        <end position="430"/>
    </location>
</feature>
<feature type="transmembrane region" description="Helical; Signal-anchor for type II membrane protein" evidence="3">
    <location>
        <begin position="15"/>
        <end position="35"/>
    </location>
</feature>
<feature type="short sequence motif" description="GDS motif">
    <location>
        <begin position="153"/>
        <end position="155"/>
    </location>
</feature>
<feature type="short sequence motif" description="DCXHWCLPGXXDXWN motif">
    <location>
        <begin position="406"/>
        <end position="420"/>
    </location>
</feature>
<comment type="function">
    <text evidence="1 2">May act as a bridging protein that binds pectin and other cell wall polysaccharides. Probably involved in maintaining esterification of pectins (By similarity). May be involved in the specific O-acetylation of cell wall polymers (By similarity).</text>
</comment>
<comment type="subcellular location">
    <subcellularLocation>
        <location evidence="4">Membrane</location>
        <topology evidence="4">Single-pass type II membrane protein</topology>
    </subcellularLocation>
</comment>
<comment type="miscellaneous">
    <text evidence="5">Contains 2 motifs that are conserved in esterases, but it is unlikely that this protein belongs to the catalytically active pectin esterases.</text>
</comment>
<comment type="similarity">
    <text evidence="4">Belongs to the PC-esterase family. TBL subfamily.</text>
</comment>
<comment type="sequence caution" evidence="4">
    <conflict type="erroneous initiation">
        <sequence resource="EMBL-CDS" id="CAA23045"/>
    </conflict>
    <text>Truncated N-terminus.</text>
</comment>
<comment type="sequence caution" evidence="4">
    <conflict type="erroneous initiation">
        <sequence resource="EMBL-CDS" id="CAB81297"/>
    </conflict>
    <text>Truncated N-terminus.</text>
</comment>
<evidence type="ECO:0000250" key="1">
    <source>
        <dbReference type="UniProtKB" id="Q9FG35"/>
    </source>
</evidence>
<evidence type="ECO:0000250" key="2">
    <source>
        <dbReference type="UniProtKB" id="Q9LY46"/>
    </source>
</evidence>
<evidence type="ECO:0000255" key="3"/>
<evidence type="ECO:0000305" key="4"/>
<evidence type="ECO:0000305" key="5">
    <source>
    </source>
</evidence>
<reference key="1">
    <citation type="journal article" date="1999" name="Nature">
        <title>Sequence and analysis of chromosome 4 of the plant Arabidopsis thaliana.</title>
        <authorList>
            <person name="Mayer K.F.X."/>
            <person name="Schueller C."/>
            <person name="Wambutt R."/>
            <person name="Murphy G."/>
            <person name="Volckaert G."/>
            <person name="Pohl T."/>
            <person name="Duesterhoeft A."/>
            <person name="Stiekema W."/>
            <person name="Entian K.-D."/>
            <person name="Terryn N."/>
            <person name="Harris B."/>
            <person name="Ansorge W."/>
            <person name="Brandt P."/>
            <person name="Grivell L.A."/>
            <person name="Rieger M."/>
            <person name="Weichselgartner M."/>
            <person name="de Simone V."/>
            <person name="Obermaier B."/>
            <person name="Mache R."/>
            <person name="Mueller M."/>
            <person name="Kreis M."/>
            <person name="Delseny M."/>
            <person name="Puigdomenech P."/>
            <person name="Watson M."/>
            <person name="Schmidtheini T."/>
            <person name="Reichert B."/>
            <person name="Portetelle D."/>
            <person name="Perez-Alonso M."/>
            <person name="Boutry M."/>
            <person name="Bancroft I."/>
            <person name="Vos P."/>
            <person name="Hoheisel J."/>
            <person name="Zimmermann W."/>
            <person name="Wedler H."/>
            <person name="Ridley P."/>
            <person name="Langham S.-A."/>
            <person name="McCullagh B."/>
            <person name="Bilham L."/>
            <person name="Robben J."/>
            <person name="van der Schueren J."/>
            <person name="Grymonprez B."/>
            <person name="Chuang Y.-J."/>
            <person name="Vandenbussche F."/>
            <person name="Braeken M."/>
            <person name="Weltjens I."/>
            <person name="Voet M."/>
            <person name="Bastiaens I."/>
            <person name="Aert R."/>
            <person name="Defoor E."/>
            <person name="Weitzenegger T."/>
            <person name="Bothe G."/>
            <person name="Ramsperger U."/>
            <person name="Hilbert H."/>
            <person name="Braun M."/>
            <person name="Holzer E."/>
            <person name="Brandt A."/>
            <person name="Peters S."/>
            <person name="van Staveren M."/>
            <person name="Dirkse W."/>
            <person name="Mooijman P."/>
            <person name="Klein Lankhorst R."/>
            <person name="Rose M."/>
            <person name="Hauf J."/>
            <person name="Koetter P."/>
            <person name="Berneiser S."/>
            <person name="Hempel S."/>
            <person name="Feldpausch M."/>
            <person name="Lamberth S."/>
            <person name="Van den Daele H."/>
            <person name="De Keyser A."/>
            <person name="Buysshaert C."/>
            <person name="Gielen J."/>
            <person name="Villarroel R."/>
            <person name="De Clercq R."/>
            <person name="van Montagu M."/>
            <person name="Rogers J."/>
            <person name="Cronin A."/>
            <person name="Quail M.A."/>
            <person name="Bray-Allen S."/>
            <person name="Clark L."/>
            <person name="Doggett J."/>
            <person name="Hall S."/>
            <person name="Kay M."/>
            <person name="Lennard N."/>
            <person name="McLay K."/>
            <person name="Mayes R."/>
            <person name="Pettett A."/>
            <person name="Rajandream M.A."/>
            <person name="Lyne M."/>
            <person name="Benes V."/>
            <person name="Rechmann S."/>
            <person name="Borkova D."/>
            <person name="Bloecker H."/>
            <person name="Scharfe M."/>
            <person name="Grimm M."/>
            <person name="Loehnert T.-H."/>
            <person name="Dose S."/>
            <person name="de Haan M."/>
            <person name="Maarse A.C."/>
            <person name="Schaefer M."/>
            <person name="Mueller-Auer S."/>
            <person name="Gabel C."/>
            <person name="Fuchs M."/>
            <person name="Fartmann B."/>
            <person name="Granderath K."/>
            <person name="Dauner D."/>
            <person name="Herzl A."/>
            <person name="Neumann S."/>
            <person name="Argiriou A."/>
            <person name="Vitale D."/>
            <person name="Liguori R."/>
            <person name="Piravandi E."/>
            <person name="Massenet O."/>
            <person name="Quigley F."/>
            <person name="Clabauld G."/>
            <person name="Muendlein A."/>
            <person name="Felber R."/>
            <person name="Schnabl S."/>
            <person name="Hiller R."/>
            <person name="Schmidt W."/>
            <person name="Lecharny A."/>
            <person name="Aubourg S."/>
            <person name="Chefdor F."/>
            <person name="Cooke R."/>
            <person name="Berger C."/>
            <person name="Monfort A."/>
            <person name="Casacuberta E."/>
            <person name="Gibbons T."/>
            <person name="Weber N."/>
            <person name="Vandenbol M."/>
            <person name="Bargues M."/>
            <person name="Terol J."/>
            <person name="Torres A."/>
            <person name="Perez-Perez A."/>
            <person name="Purnelle B."/>
            <person name="Bent E."/>
            <person name="Johnson S."/>
            <person name="Tacon D."/>
            <person name="Jesse T."/>
            <person name="Heijnen L."/>
            <person name="Schwarz S."/>
            <person name="Scholler P."/>
            <person name="Heber S."/>
            <person name="Francs P."/>
            <person name="Bielke C."/>
            <person name="Frishman D."/>
            <person name="Haase D."/>
            <person name="Lemcke K."/>
            <person name="Mewes H.-W."/>
            <person name="Stocker S."/>
            <person name="Zaccaria P."/>
            <person name="Bevan M."/>
            <person name="Wilson R.K."/>
            <person name="de la Bastide M."/>
            <person name="Habermann K."/>
            <person name="Parnell L."/>
            <person name="Dedhia N."/>
            <person name="Gnoj L."/>
            <person name="Schutz K."/>
            <person name="Huang E."/>
            <person name="Spiegel L."/>
            <person name="Sekhon M."/>
            <person name="Murray J."/>
            <person name="Sheet P."/>
            <person name="Cordes M."/>
            <person name="Abu-Threideh J."/>
            <person name="Stoneking T."/>
            <person name="Kalicki J."/>
            <person name="Graves T."/>
            <person name="Harmon G."/>
            <person name="Edwards J."/>
            <person name="Latreille P."/>
            <person name="Courtney L."/>
            <person name="Cloud J."/>
            <person name="Abbott A."/>
            <person name="Scott K."/>
            <person name="Johnson D."/>
            <person name="Minx P."/>
            <person name="Bentley D."/>
            <person name="Fulton B."/>
            <person name="Miller N."/>
            <person name="Greco T."/>
            <person name="Kemp K."/>
            <person name="Kramer J."/>
            <person name="Fulton L."/>
            <person name="Mardis E."/>
            <person name="Dante M."/>
            <person name="Pepin K."/>
            <person name="Hillier L.W."/>
            <person name="Nelson J."/>
            <person name="Spieth J."/>
            <person name="Ryan E."/>
            <person name="Andrews S."/>
            <person name="Geisel C."/>
            <person name="Layman D."/>
            <person name="Du H."/>
            <person name="Ali J."/>
            <person name="Berghoff A."/>
            <person name="Jones K."/>
            <person name="Drone K."/>
            <person name="Cotton M."/>
            <person name="Joshu C."/>
            <person name="Antonoiu B."/>
            <person name="Zidanic M."/>
            <person name="Strong C."/>
            <person name="Sun H."/>
            <person name="Lamar B."/>
            <person name="Yordan C."/>
            <person name="Ma P."/>
            <person name="Zhong J."/>
            <person name="Preston R."/>
            <person name="Vil D."/>
            <person name="Shekher M."/>
            <person name="Matero A."/>
            <person name="Shah R."/>
            <person name="Swaby I.K."/>
            <person name="O'Shaughnessy A."/>
            <person name="Rodriguez M."/>
            <person name="Hoffman J."/>
            <person name="Till S."/>
            <person name="Granat S."/>
            <person name="Shohdy N."/>
            <person name="Hasegawa A."/>
            <person name="Hameed A."/>
            <person name="Lodhi M."/>
            <person name="Johnson A."/>
            <person name="Chen E."/>
            <person name="Marra M.A."/>
            <person name="Martienssen R."/>
            <person name="McCombie W.R."/>
        </authorList>
    </citation>
    <scope>NUCLEOTIDE SEQUENCE [LARGE SCALE GENOMIC DNA]</scope>
    <source>
        <strain>cv. Columbia</strain>
    </source>
</reference>
<reference key="2">
    <citation type="journal article" date="2017" name="Plant J.">
        <title>Araport11: a complete reannotation of the Arabidopsis thaliana reference genome.</title>
        <authorList>
            <person name="Cheng C.Y."/>
            <person name="Krishnakumar V."/>
            <person name="Chan A.P."/>
            <person name="Thibaud-Nissen F."/>
            <person name="Schobel S."/>
            <person name="Town C.D."/>
        </authorList>
    </citation>
    <scope>GENOME REANNOTATION</scope>
    <source>
        <strain>cv. Columbia</strain>
    </source>
</reference>
<reference key="3">
    <citation type="journal article" date="2003" name="Science">
        <title>Empirical analysis of transcriptional activity in the Arabidopsis genome.</title>
        <authorList>
            <person name="Yamada K."/>
            <person name="Lim J."/>
            <person name="Dale J.M."/>
            <person name="Chen H."/>
            <person name="Shinn P."/>
            <person name="Palm C.J."/>
            <person name="Southwick A.M."/>
            <person name="Wu H.C."/>
            <person name="Kim C.J."/>
            <person name="Nguyen M."/>
            <person name="Pham P.K."/>
            <person name="Cheuk R.F."/>
            <person name="Karlin-Newmann G."/>
            <person name="Liu S.X."/>
            <person name="Lam B."/>
            <person name="Sakano H."/>
            <person name="Wu T."/>
            <person name="Yu G."/>
            <person name="Miranda M."/>
            <person name="Quach H.L."/>
            <person name="Tripp M."/>
            <person name="Chang C.H."/>
            <person name="Lee J.M."/>
            <person name="Toriumi M.J."/>
            <person name="Chan M.M."/>
            <person name="Tang C.C."/>
            <person name="Onodera C.S."/>
            <person name="Deng J.M."/>
            <person name="Akiyama K."/>
            <person name="Ansari Y."/>
            <person name="Arakawa T."/>
            <person name="Banh J."/>
            <person name="Banno F."/>
            <person name="Bowser L."/>
            <person name="Brooks S.Y."/>
            <person name="Carninci P."/>
            <person name="Chao Q."/>
            <person name="Choy N."/>
            <person name="Enju A."/>
            <person name="Goldsmith A.D."/>
            <person name="Gurjal M."/>
            <person name="Hansen N.F."/>
            <person name="Hayashizaki Y."/>
            <person name="Johnson-Hopson C."/>
            <person name="Hsuan V.W."/>
            <person name="Iida K."/>
            <person name="Karnes M."/>
            <person name="Khan S."/>
            <person name="Koesema E."/>
            <person name="Ishida J."/>
            <person name="Jiang P.X."/>
            <person name="Jones T."/>
            <person name="Kawai J."/>
            <person name="Kamiya A."/>
            <person name="Meyers C."/>
            <person name="Nakajima M."/>
            <person name="Narusaka M."/>
            <person name="Seki M."/>
            <person name="Sakurai T."/>
            <person name="Satou M."/>
            <person name="Tamse R."/>
            <person name="Vaysberg M."/>
            <person name="Wallender E.K."/>
            <person name="Wong C."/>
            <person name="Yamamura Y."/>
            <person name="Yuan S."/>
            <person name="Shinozaki K."/>
            <person name="Davis R.W."/>
            <person name="Theologis A."/>
            <person name="Ecker J.R."/>
        </authorList>
    </citation>
    <scope>NUCLEOTIDE SEQUENCE [LARGE SCALE MRNA]</scope>
    <source>
        <strain>cv. Columbia</strain>
    </source>
</reference>
<reference key="4">
    <citation type="journal article" date="2007" name="Plant J.">
        <title>Arabidopsis ESK1 encodes a novel regulator of freezing tolerance.</title>
        <authorList>
            <person name="Xin Z."/>
            <person name="Mandaokar A."/>
            <person name="Chen J."/>
            <person name="Last R.L."/>
            <person name="Browse J."/>
        </authorList>
    </citation>
    <scope>GENE FAMILY</scope>
    <source>
        <strain>cv. Columbia</strain>
    </source>
</reference>
<reference key="5">
    <citation type="journal article" date="2010" name="Plant Physiol.">
        <title>TRICHOME BIREFRINGENCE and its homolog AT5G01360 encode plant-specific DUF231 proteins required for cellulose biosynthesis in Arabidopsis.</title>
        <authorList>
            <person name="Bischoff V."/>
            <person name="Nita S."/>
            <person name="Neumetzler L."/>
            <person name="Schindelasch D."/>
            <person name="Urbain A."/>
            <person name="Eshed R."/>
            <person name="Persson S."/>
            <person name="Delmer D."/>
            <person name="Scheible W.R."/>
        </authorList>
    </citation>
    <scope>GENE FAMILY</scope>
    <scope>NOMENCLATURE</scope>
</reference>
<reference key="6">
    <citation type="journal article" date="2010" name="Plant Signal. Behav.">
        <title>Involvement of TBL/DUF231 proteins into cell wall biology.</title>
        <authorList>
            <person name="Bischoff V."/>
            <person name="Selbig J."/>
            <person name="Scheible W.R."/>
        </authorList>
    </citation>
    <scope>3D-STRUCTURE MODELING</scope>
</reference>
<accession>Q8H1R3</accession>
<accession>Q9SUP8</accession>